<organism>
    <name type="scientific">Homo sapiens</name>
    <name type="common">Human</name>
    <dbReference type="NCBI Taxonomy" id="9606"/>
    <lineage>
        <taxon>Eukaryota</taxon>
        <taxon>Metazoa</taxon>
        <taxon>Chordata</taxon>
        <taxon>Craniata</taxon>
        <taxon>Vertebrata</taxon>
        <taxon>Euteleostomi</taxon>
        <taxon>Mammalia</taxon>
        <taxon>Eutheria</taxon>
        <taxon>Euarchontoglires</taxon>
        <taxon>Primates</taxon>
        <taxon>Haplorrhini</taxon>
        <taxon>Catarrhini</taxon>
        <taxon>Hominidae</taxon>
        <taxon>Homo</taxon>
    </lineage>
</organism>
<dbReference type="EMBL" id="AK074859">
    <property type="protein sequence ID" value="BAC11251.1"/>
    <property type="molecule type" value="mRNA"/>
</dbReference>
<dbReference type="EMBL" id="BC065822">
    <property type="protein sequence ID" value="AAH65822.1"/>
    <property type="molecule type" value="mRNA"/>
</dbReference>
<dbReference type="CCDS" id="CCDS12930.1"/>
<dbReference type="RefSeq" id="NP_976308.1">
    <property type="nucleotide sequence ID" value="NM_203374.2"/>
</dbReference>
<dbReference type="SMR" id="Q8NCA9"/>
<dbReference type="BioGRID" id="127091">
    <property type="interactions" value="34"/>
</dbReference>
<dbReference type="FunCoup" id="Q8NCA9">
    <property type="interactions" value="652"/>
</dbReference>
<dbReference type="IntAct" id="Q8NCA9">
    <property type="interactions" value="29"/>
</dbReference>
<dbReference type="MINT" id="Q8NCA9"/>
<dbReference type="STRING" id="9606.ENSP00000320096"/>
<dbReference type="GlyGen" id="Q8NCA9">
    <property type="glycosylation" value="1 site"/>
</dbReference>
<dbReference type="iPTMnet" id="Q8NCA9"/>
<dbReference type="PhosphoSitePlus" id="Q8NCA9"/>
<dbReference type="BioMuta" id="ZNF784"/>
<dbReference type="DMDM" id="74760138"/>
<dbReference type="jPOST" id="Q8NCA9"/>
<dbReference type="MassIVE" id="Q8NCA9"/>
<dbReference type="PaxDb" id="9606-ENSP00000320096"/>
<dbReference type="PeptideAtlas" id="Q8NCA9"/>
<dbReference type="ProteomicsDB" id="72867"/>
<dbReference type="Pumba" id="Q8NCA9"/>
<dbReference type="Antibodypedia" id="46462">
    <property type="antibodies" value="25 antibodies from 12 providers"/>
</dbReference>
<dbReference type="DNASU" id="147808"/>
<dbReference type="Ensembl" id="ENST00000325351.5">
    <property type="protein sequence ID" value="ENSP00000320096.2"/>
    <property type="gene ID" value="ENSG00000179922.6"/>
</dbReference>
<dbReference type="GeneID" id="147808"/>
<dbReference type="KEGG" id="hsa:147808"/>
<dbReference type="MANE-Select" id="ENST00000325351.5">
    <property type="protein sequence ID" value="ENSP00000320096.2"/>
    <property type="RefSeq nucleotide sequence ID" value="NM_203374.2"/>
    <property type="RefSeq protein sequence ID" value="NP_976308.1"/>
</dbReference>
<dbReference type="UCSC" id="uc002qll.2">
    <property type="organism name" value="human"/>
</dbReference>
<dbReference type="AGR" id="HGNC:33111"/>
<dbReference type="CTD" id="147808"/>
<dbReference type="GeneCards" id="ZNF784"/>
<dbReference type="HGNC" id="HGNC:33111">
    <property type="gene designation" value="ZNF784"/>
</dbReference>
<dbReference type="HPA" id="ENSG00000179922">
    <property type="expression patterns" value="Tissue enhanced (skeletal)"/>
</dbReference>
<dbReference type="neXtProt" id="NX_Q8NCA9"/>
<dbReference type="OpenTargets" id="ENSG00000179922"/>
<dbReference type="PharmGKB" id="PA162410458"/>
<dbReference type="VEuPathDB" id="HostDB:ENSG00000179922"/>
<dbReference type="eggNOG" id="KOG1721">
    <property type="taxonomic scope" value="Eukaryota"/>
</dbReference>
<dbReference type="GeneTree" id="ENSGT00940000162820"/>
<dbReference type="HOGENOM" id="CLU_055458_0_0_1"/>
<dbReference type="InParanoid" id="Q8NCA9"/>
<dbReference type="OMA" id="GHSCAGP"/>
<dbReference type="OrthoDB" id="9439903at2759"/>
<dbReference type="PAN-GO" id="Q8NCA9">
    <property type="GO annotations" value="4 GO annotations based on evolutionary models"/>
</dbReference>
<dbReference type="PhylomeDB" id="Q8NCA9"/>
<dbReference type="TreeFam" id="TF337573"/>
<dbReference type="PathwayCommons" id="Q8NCA9"/>
<dbReference type="SignaLink" id="Q8NCA9"/>
<dbReference type="BioGRID-ORCS" id="147808">
    <property type="hits" value="16 hits in 1174 CRISPR screens"/>
</dbReference>
<dbReference type="ChiTaRS" id="ZNF784">
    <property type="organism name" value="human"/>
</dbReference>
<dbReference type="GenomeRNAi" id="147808"/>
<dbReference type="Pharos" id="Q8NCA9">
    <property type="development level" value="Tdark"/>
</dbReference>
<dbReference type="PRO" id="PR:Q8NCA9"/>
<dbReference type="Proteomes" id="UP000005640">
    <property type="component" value="Chromosome 19"/>
</dbReference>
<dbReference type="RNAct" id="Q8NCA9">
    <property type="molecule type" value="protein"/>
</dbReference>
<dbReference type="Bgee" id="ENSG00000179922">
    <property type="expression patterns" value="Expressed in hindlimb stylopod muscle and 100 other cell types or tissues"/>
</dbReference>
<dbReference type="ExpressionAtlas" id="Q8NCA9">
    <property type="expression patterns" value="baseline and differential"/>
</dbReference>
<dbReference type="GO" id="GO:0005634">
    <property type="term" value="C:nucleus"/>
    <property type="evidence" value="ECO:0000318"/>
    <property type="project" value="GO_Central"/>
</dbReference>
<dbReference type="GO" id="GO:0001228">
    <property type="term" value="F:DNA-binding transcription activator activity, RNA polymerase II-specific"/>
    <property type="evidence" value="ECO:0000318"/>
    <property type="project" value="GO_Central"/>
</dbReference>
<dbReference type="GO" id="GO:0000978">
    <property type="term" value="F:RNA polymerase II cis-regulatory region sequence-specific DNA binding"/>
    <property type="evidence" value="ECO:0000318"/>
    <property type="project" value="GO_Central"/>
</dbReference>
<dbReference type="GO" id="GO:1990837">
    <property type="term" value="F:sequence-specific double-stranded DNA binding"/>
    <property type="evidence" value="ECO:0000314"/>
    <property type="project" value="ARUK-UCL"/>
</dbReference>
<dbReference type="GO" id="GO:0008270">
    <property type="term" value="F:zinc ion binding"/>
    <property type="evidence" value="ECO:0007669"/>
    <property type="project" value="UniProtKB-KW"/>
</dbReference>
<dbReference type="GO" id="GO:0002244">
    <property type="term" value="P:hematopoietic progenitor cell differentiation"/>
    <property type="evidence" value="ECO:0007669"/>
    <property type="project" value="Ensembl"/>
</dbReference>
<dbReference type="GO" id="GO:0006357">
    <property type="term" value="P:regulation of transcription by RNA polymerase II"/>
    <property type="evidence" value="ECO:0000318"/>
    <property type="project" value="GO_Central"/>
</dbReference>
<dbReference type="FunFam" id="3.30.160.60:FF:000446">
    <property type="entry name" value="Zinc finger protein"/>
    <property type="match status" value="1"/>
</dbReference>
<dbReference type="FunFam" id="3.30.160.60:FF:000787">
    <property type="entry name" value="Zinc finger protein 784"/>
    <property type="match status" value="1"/>
</dbReference>
<dbReference type="FunFam" id="3.30.160.60:FF:000585">
    <property type="entry name" value="zinc finger protein 784"/>
    <property type="match status" value="1"/>
</dbReference>
<dbReference type="FunFam" id="3.30.160.60:FF:001426">
    <property type="entry name" value="zinc finger protein 784"/>
    <property type="match status" value="1"/>
</dbReference>
<dbReference type="FunFam" id="3.30.160.60:FF:001522">
    <property type="entry name" value="zinc finger protein 784"/>
    <property type="match status" value="1"/>
</dbReference>
<dbReference type="Gene3D" id="3.30.160.60">
    <property type="entry name" value="Classic Zinc Finger"/>
    <property type="match status" value="5"/>
</dbReference>
<dbReference type="InterPro" id="IPR036236">
    <property type="entry name" value="Znf_C2H2_sf"/>
</dbReference>
<dbReference type="InterPro" id="IPR013087">
    <property type="entry name" value="Znf_C2H2_type"/>
</dbReference>
<dbReference type="PANTHER" id="PTHR24379">
    <property type="entry name" value="KRAB AND ZINC FINGER DOMAIN-CONTAINING"/>
    <property type="match status" value="1"/>
</dbReference>
<dbReference type="PANTHER" id="PTHR24379:SF133">
    <property type="entry name" value="ZFP617 PROTEIN-RELATED"/>
    <property type="match status" value="1"/>
</dbReference>
<dbReference type="Pfam" id="PF00096">
    <property type="entry name" value="zf-C2H2"/>
    <property type="match status" value="3"/>
</dbReference>
<dbReference type="SMART" id="SM00355">
    <property type="entry name" value="ZnF_C2H2"/>
    <property type="match status" value="6"/>
</dbReference>
<dbReference type="SUPFAM" id="SSF57667">
    <property type="entry name" value="beta-beta-alpha zinc fingers"/>
    <property type="match status" value="3"/>
</dbReference>
<dbReference type="PROSITE" id="PS00028">
    <property type="entry name" value="ZINC_FINGER_C2H2_1"/>
    <property type="match status" value="6"/>
</dbReference>
<dbReference type="PROSITE" id="PS50157">
    <property type="entry name" value="ZINC_FINGER_C2H2_2"/>
    <property type="match status" value="5"/>
</dbReference>
<gene>
    <name type="primary">ZNF784</name>
</gene>
<sequence length="323" mass="34237">MAAARPEAQSRSSPTPESRSQEPLDLVLVPDDCRPGTPPSDLIEIQVVKVTDTTLVPEPPEPGSFHCALCPAAFRLVSELLFHEHGHLAGAEGGGQGGDPSRCHVCGHSCPGPASLRAHYSLHTGERPYRCALCPRAFKALAPLLRHQHRHGVEPGTSRRPPDTAAVAEQRPGVAPERAEVVMAAAAAGAAVGKPFACRFCAKPFRRSSDMRDHERVHTGERPYHCGICGKGFTQSSVLSGHARIHTGERPFRCTLCDRTFNNSSNFRKHQRTHFHGPGPGLGDSGGQLGSSAAEGSGSGCGVGDPAEEGRGETAKVKVEADQ</sequence>
<reference key="1">
    <citation type="journal article" date="2004" name="Nat. Genet.">
        <title>Complete sequencing and characterization of 21,243 full-length human cDNAs.</title>
        <authorList>
            <person name="Ota T."/>
            <person name="Suzuki Y."/>
            <person name="Nishikawa T."/>
            <person name="Otsuki T."/>
            <person name="Sugiyama T."/>
            <person name="Irie R."/>
            <person name="Wakamatsu A."/>
            <person name="Hayashi K."/>
            <person name="Sato H."/>
            <person name="Nagai K."/>
            <person name="Kimura K."/>
            <person name="Makita H."/>
            <person name="Sekine M."/>
            <person name="Obayashi M."/>
            <person name="Nishi T."/>
            <person name="Shibahara T."/>
            <person name="Tanaka T."/>
            <person name="Ishii S."/>
            <person name="Yamamoto J."/>
            <person name="Saito K."/>
            <person name="Kawai Y."/>
            <person name="Isono Y."/>
            <person name="Nakamura Y."/>
            <person name="Nagahari K."/>
            <person name="Murakami K."/>
            <person name="Yasuda T."/>
            <person name="Iwayanagi T."/>
            <person name="Wagatsuma M."/>
            <person name="Shiratori A."/>
            <person name="Sudo H."/>
            <person name="Hosoiri T."/>
            <person name="Kaku Y."/>
            <person name="Kodaira H."/>
            <person name="Kondo H."/>
            <person name="Sugawara M."/>
            <person name="Takahashi M."/>
            <person name="Kanda K."/>
            <person name="Yokoi T."/>
            <person name="Furuya T."/>
            <person name="Kikkawa E."/>
            <person name="Omura Y."/>
            <person name="Abe K."/>
            <person name="Kamihara K."/>
            <person name="Katsuta N."/>
            <person name="Sato K."/>
            <person name="Tanikawa M."/>
            <person name="Yamazaki M."/>
            <person name="Ninomiya K."/>
            <person name="Ishibashi T."/>
            <person name="Yamashita H."/>
            <person name="Murakawa K."/>
            <person name="Fujimori K."/>
            <person name="Tanai H."/>
            <person name="Kimata M."/>
            <person name="Watanabe M."/>
            <person name="Hiraoka S."/>
            <person name="Chiba Y."/>
            <person name="Ishida S."/>
            <person name="Ono Y."/>
            <person name="Takiguchi S."/>
            <person name="Watanabe S."/>
            <person name="Yosida M."/>
            <person name="Hotuta T."/>
            <person name="Kusano J."/>
            <person name="Kanehori K."/>
            <person name="Takahashi-Fujii A."/>
            <person name="Hara H."/>
            <person name="Tanase T.-O."/>
            <person name="Nomura Y."/>
            <person name="Togiya S."/>
            <person name="Komai F."/>
            <person name="Hara R."/>
            <person name="Takeuchi K."/>
            <person name="Arita M."/>
            <person name="Imose N."/>
            <person name="Musashino K."/>
            <person name="Yuuki H."/>
            <person name="Oshima A."/>
            <person name="Sasaki N."/>
            <person name="Aotsuka S."/>
            <person name="Yoshikawa Y."/>
            <person name="Matsunawa H."/>
            <person name="Ichihara T."/>
            <person name="Shiohata N."/>
            <person name="Sano S."/>
            <person name="Moriya S."/>
            <person name="Momiyama H."/>
            <person name="Satoh N."/>
            <person name="Takami S."/>
            <person name="Terashima Y."/>
            <person name="Suzuki O."/>
            <person name="Nakagawa S."/>
            <person name="Senoh A."/>
            <person name="Mizoguchi H."/>
            <person name="Goto Y."/>
            <person name="Shimizu F."/>
            <person name="Wakebe H."/>
            <person name="Hishigaki H."/>
            <person name="Watanabe T."/>
            <person name="Sugiyama A."/>
            <person name="Takemoto M."/>
            <person name="Kawakami B."/>
            <person name="Yamazaki M."/>
            <person name="Watanabe K."/>
            <person name="Kumagai A."/>
            <person name="Itakura S."/>
            <person name="Fukuzumi Y."/>
            <person name="Fujimori Y."/>
            <person name="Komiyama M."/>
            <person name="Tashiro H."/>
            <person name="Tanigami A."/>
            <person name="Fujiwara T."/>
            <person name="Ono T."/>
            <person name="Yamada K."/>
            <person name="Fujii Y."/>
            <person name="Ozaki K."/>
            <person name="Hirao M."/>
            <person name="Ohmori Y."/>
            <person name="Kawabata A."/>
            <person name="Hikiji T."/>
            <person name="Kobatake N."/>
            <person name="Inagaki H."/>
            <person name="Ikema Y."/>
            <person name="Okamoto S."/>
            <person name="Okitani R."/>
            <person name="Kawakami T."/>
            <person name="Noguchi S."/>
            <person name="Itoh T."/>
            <person name="Shigeta K."/>
            <person name="Senba T."/>
            <person name="Matsumura K."/>
            <person name="Nakajima Y."/>
            <person name="Mizuno T."/>
            <person name="Morinaga M."/>
            <person name="Sasaki M."/>
            <person name="Togashi T."/>
            <person name="Oyama M."/>
            <person name="Hata H."/>
            <person name="Watanabe M."/>
            <person name="Komatsu T."/>
            <person name="Mizushima-Sugano J."/>
            <person name="Satoh T."/>
            <person name="Shirai Y."/>
            <person name="Takahashi Y."/>
            <person name="Nakagawa K."/>
            <person name="Okumura K."/>
            <person name="Nagase T."/>
            <person name="Nomura N."/>
            <person name="Kikuchi H."/>
            <person name="Masuho Y."/>
            <person name="Yamashita R."/>
            <person name="Nakai K."/>
            <person name="Yada T."/>
            <person name="Nakamura Y."/>
            <person name="Ohara O."/>
            <person name="Isogai T."/>
            <person name="Sugano S."/>
        </authorList>
    </citation>
    <scope>NUCLEOTIDE SEQUENCE [LARGE SCALE MRNA]</scope>
    <source>
        <tissue>Teratocarcinoma</tissue>
    </source>
</reference>
<reference key="2">
    <citation type="journal article" date="2004" name="Genome Res.">
        <title>The status, quality, and expansion of the NIH full-length cDNA project: the Mammalian Gene Collection (MGC).</title>
        <authorList>
            <consortium name="The MGC Project Team"/>
        </authorList>
    </citation>
    <scope>NUCLEOTIDE SEQUENCE [LARGE SCALE MRNA]</scope>
    <source>
        <tissue>PNS</tissue>
    </source>
</reference>
<reference key="3">
    <citation type="journal article" date="2013" name="J. Proteome Res.">
        <title>Toward a comprehensive characterization of a human cancer cell phosphoproteome.</title>
        <authorList>
            <person name="Zhou H."/>
            <person name="Di Palma S."/>
            <person name="Preisinger C."/>
            <person name="Peng M."/>
            <person name="Polat A.N."/>
            <person name="Heck A.J."/>
            <person name="Mohammed S."/>
        </authorList>
    </citation>
    <scope>PHOSPHORYLATION [LARGE SCALE ANALYSIS] AT SER-13</scope>
    <scope>IDENTIFICATION BY MASS SPECTROMETRY [LARGE SCALE ANALYSIS]</scope>
    <source>
        <tissue>Erythroleukemia</tissue>
    </source>
</reference>
<reference key="4">
    <citation type="journal article" date="2014" name="Nat. Struct. Mol. Biol.">
        <title>Uncovering global SUMOylation signaling networks in a site-specific manner.</title>
        <authorList>
            <person name="Hendriks I.A."/>
            <person name="D'Souza R.C."/>
            <person name="Yang B."/>
            <person name="Verlaan-de Vries M."/>
            <person name="Mann M."/>
            <person name="Vertegaal A.C."/>
        </authorList>
    </citation>
    <scope>SUMOYLATION [LARGE SCALE ANALYSIS] AT LYS-318</scope>
    <scope>IDENTIFICATION BY MASS SPECTROMETRY [LARGE SCALE ANALYSIS]</scope>
</reference>
<reference key="5">
    <citation type="journal article" date="2015" name="Cell Rep.">
        <title>SUMO-2 orchestrates chromatin modifiers in response to DNA damage.</title>
        <authorList>
            <person name="Hendriks I.A."/>
            <person name="Treffers L.W."/>
            <person name="Verlaan-de Vries M."/>
            <person name="Olsen J.V."/>
            <person name="Vertegaal A.C."/>
        </authorList>
    </citation>
    <scope>SUMOYLATION [LARGE SCALE ANALYSIS] AT LYS-318</scope>
    <scope>IDENTIFICATION BY MASS SPECTROMETRY [LARGE SCALE ANALYSIS]</scope>
</reference>
<reference key="6">
    <citation type="journal article" date="2017" name="Nat. Struct. Mol. Biol.">
        <title>Site-specific mapping of the human SUMO proteome reveals co-modification with phosphorylation.</title>
        <authorList>
            <person name="Hendriks I.A."/>
            <person name="Lyon D."/>
            <person name="Young C."/>
            <person name="Jensen L.J."/>
            <person name="Vertegaal A.C."/>
            <person name="Nielsen M.L."/>
        </authorList>
    </citation>
    <scope>SUMOYLATION [LARGE SCALE ANALYSIS] AT LYS-318</scope>
    <scope>IDENTIFICATION BY MASS SPECTROMETRY [LARGE SCALE ANALYSIS]</scope>
</reference>
<proteinExistence type="evidence at protein level"/>
<feature type="chain" id="PRO_0000270996" description="Zinc finger protein 784">
    <location>
        <begin position="1"/>
        <end position="323"/>
    </location>
</feature>
<feature type="zinc finger region" description="C2H2-type 1" evidence="1">
    <location>
        <begin position="65"/>
        <end position="87"/>
    </location>
</feature>
<feature type="zinc finger region" description="C2H2-type 2" evidence="1">
    <location>
        <begin position="101"/>
        <end position="123"/>
    </location>
</feature>
<feature type="zinc finger region" description="C2H2-type 3" evidence="1">
    <location>
        <begin position="129"/>
        <end position="151"/>
    </location>
</feature>
<feature type="zinc finger region" description="C2H2-type 4" evidence="1">
    <location>
        <begin position="196"/>
        <end position="218"/>
    </location>
</feature>
<feature type="zinc finger region" description="C2H2-type 5" evidence="1">
    <location>
        <begin position="224"/>
        <end position="246"/>
    </location>
</feature>
<feature type="zinc finger region" description="C2H2-type 6" evidence="1">
    <location>
        <begin position="252"/>
        <end position="274"/>
    </location>
</feature>
<feature type="region of interest" description="Disordered" evidence="2">
    <location>
        <begin position="1"/>
        <end position="26"/>
    </location>
</feature>
<feature type="region of interest" description="Disordered" evidence="2">
    <location>
        <begin position="269"/>
        <end position="323"/>
    </location>
</feature>
<feature type="compositionally biased region" description="Polar residues" evidence="2">
    <location>
        <begin position="9"/>
        <end position="18"/>
    </location>
</feature>
<feature type="compositionally biased region" description="Gly residues" evidence="2">
    <location>
        <begin position="278"/>
        <end position="289"/>
    </location>
</feature>
<feature type="compositionally biased region" description="Basic and acidic residues" evidence="2">
    <location>
        <begin position="308"/>
        <end position="323"/>
    </location>
</feature>
<feature type="modified residue" description="Phosphoserine" evidence="4">
    <location>
        <position position="13"/>
    </location>
</feature>
<feature type="cross-link" description="Glycyl lysine isopeptide (Lys-Gly) (interchain with G-Cter in SUMO2)" evidence="5 6 7">
    <location>
        <position position="318"/>
    </location>
</feature>
<evidence type="ECO:0000255" key="1">
    <source>
        <dbReference type="PROSITE-ProRule" id="PRU00042"/>
    </source>
</evidence>
<evidence type="ECO:0000256" key="2">
    <source>
        <dbReference type="SAM" id="MobiDB-lite"/>
    </source>
</evidence>
<evidence type="ECO:0000305" key="3"/>
<evidence type="ECO:0007744" key="4">
    <source>
    </source>
</evidence>
<evidence type="ECO:0007744" key="5">
    <source>
    </source>
</evidence>
<evidence type="ECO:0007744" key="6">
    <source>
    </source>
</evidence>
<evidence type="ECO:0007744" key="7">
    <source>
    </source>
</evidence>
<accession>Q8NCA9</accession>
<keyword id="KW-0238">DNA-binding</keyword>
<keyword id="KW-1017">Isopeptide bond</keyword>
<keyword id="KW-0479">Metal-binding</keyword>
<keyword id="KW-0539">Nucleus</keyword>
<keyword id="KW-0597">Phosphoprotein</keyword>
<keyword id="KW-1267">Proteomics identification</keyword>
<keyword id="KW-1185">Reference proteome</keyword>
<keyword id="KW-0677">Repeat</keyword>
<keyword id="KW-0804">Transcription</keyword>
<keyword id="KW-0805">Transcription regulation</keyword>
<keyword id="KW-0832">Ubl conjugation</keyword>
<keyword id="KW-0862">Zinc</keyword>
<keyword id="KW-0863">Zinc-finger</keyword>
<protein>
    <recommendedName>
        <fullName>Zinc finger protein 784</fullName>
    </recommendedName>
</protein>
<comment type="function">
    <text>May be involved in transcriptional regulation.</text>
</comment>
<comment type="interaction">
    <interactant intactId="EBI-7138303">
        <id>Q8NCA9</id>
    </interactant>
    <interactant intactId="EBI-2556193">
        <id>Q63ZY3</id>
        <label>KANK2</label>
    </interactant>
    <organismsDiffer>false</organismsDiffer>
    <experiments>3</experiments>
</comment>
<comment type="interaction">
    <interactant intactId="EBI-7138303">
        <id>Q8NCA9</id>
    </interactant>
    <interactant intactId="EBI-724076">
        <id>Q99750</id>
        <label>MDFI</label>
    </interactant>
    <organismsDiffer>false</organismsDiffer>
    <experiments>3</experiments>
</comment>
<comment type="interaction">
    <interactant intactId="EBI-7138303">
        <id>Q8NCA9</id>
    </interactant>
    <interactant intactId="EBI-10172526">
        <id>Q9UJV3-2</id>
        <label>MID2</label>
    </interactant>
    <organismsDiffer>false</organismsDiffer>
    <experiments>3</experiments>
</comment>
<comment type="interaction">
    <interactant intactId="EBI-7138303">
        <id>Q8NCA9</id>
    </interactant>
    <interactant intactId="EBI-10226430">
        <id>Q0D2K3</id>
        <label>RIPPLY1</label>
    </interactant>
    <organismsDiffer>false</organismsDiffer>
    <experiments>3</experiments>
</comment>
<comment type="interaction">
    <interactant intactId="EBI-7138303">
        <id>Q8NCA9</id>
    </interactant>
    <interactant intactId="EBI-3650647">
        <id>Q9BUZ4</id>
        <label>TRAF4</label>
    </interactant>
    <organismsDiffer>false</organismsDiffer>
    <experiments>3</experiments>
</comment>
<comment type="interaction">
    <interactant intactId="EBI-7138303">
        <id>Q8NCA9</id>
    </interactant>
    <interactant intactId="EBI-725997">
        <id>Q8WV44</id>
        <label>TRIM41</label>
    </interactant>
    <organismsDiffer>false</organismsDiffer>
    <experiments>3</experiments>
</comment>
<comment type="interaction">
    <interactant intactId="EBI-7138303">
        <id>Q8NCA9</id>
    </interactant>
    <interactant intactId="EBI-8656864">
        <id>Q6PF05</id>
        <label>TTC23L</label>
    </interactant>
    <organismsDiffer>false</organismsDiffer>
    <experiments>3</experiments>
</comment>
<comment type="subcellular location">
    <subcellularLocation>
        <location evidence="3">Nucleus</location>
    </subcellularLocation>
</comment>
<comment type="similarity">
    <text evidence="3">Belongs to the krueppel C2H2-type zinc-finger protein family.</text>
</comment>
<name>ZN784_HUMAN</name>